<protein>
    <recommendedName>
        <fullName>Recombination-associated protein RdgC</fullName>
    </recommendedName>
</protein>
<reference key="1">
    <citation type="journal article" date="2000" name="Genetics">
        <title>A homologue of the recombination-dependent growth gene, rdgC, is involved in gonococcal pilin antigenic variation.</title>
        <authorList>
            <person name="Mehr I.J."/>
            <person name="Long C.D."/>
            <person name="Serkin C.D."/>
            <person name="Seifert H.S."/>
        </authorList>
    </citation>
    <scope>NUCLEOTIDE SEQUENCE [GENOMIC DNA]</scope>
    <scope>DISRUPTION PHENOTYPE</scope>
</reference>
<reference key="2">
    <citation type="submission" date="2003-03" db="EMBL/GenBank/DDBJ databases">
        <title>The complete genome sequence of Neisseria gonorrhoeae.</title>
        <authorList>
            <person name="Lewis L.A."/>
            <person name="Gillaspy A.F."/>
            <person name="McLaughlin R.E."/>
            <person name="Gipson M."/>
            <person name="Ducey T.F."/>
            <person name="Ownbey T."/>
            <person name="Hartman K."/>
            <person name="Nydick C."/>
            <person name="Carson M.B."/>
            <person name="Vaughn J."/>
            <person name="Thomson C."/>
            <person name="Song L."/>
            <person name="Lin S."/>
            <person name="Yuan X."/>
            <person name="Najar F."/>
            <person name="Zhan M."/>
            <person name="Ren Q."/>
            <person name="Zhu H."/>
            <person name="Qi S."/>
            <person name="Kenton S.M."/>
            <person name="Lai H."/>
            <person name="White J.D."/>
            <person name="Clifton S."/>
            <person name="Roe B.A."/>
            <person name="Dyer D.W."/>
        </authorList>
    </citation>
    <scope>NUCLEOTIDE SEQUENCE [LARGE SCALE GENOMIC DNA]</scope>
    <source>
        <strain>ATCC 700825 / FA 1090</strain>
    </source>
</reference>
<comment type="function">
    <text>May be involved in recombination.</text>
</comment>
<comment type="subcellular location">
    <subcellularLocation>
        <location evidence="1">Cytoplasm</location>
        <location evidence="1">Nucleoid</location>
    </subcellularLocation>
</comment>
<comment type="disruption phenotype">
    <text evidence="2">Mutations affect pilin antigenic variation; some mutations create growth defects.</text>
</comment>
<comment type="similarity">
    <text evidence="3">Belongs to the RdgC family.</text>
</comment>
<name>RDGC_NEIG1</name>
<organism>
    <name type="scientific">Neisseria gonorrhoeae (strain ATCC 700825 / FA 1090)</name>
    <dbReference type="NCBI Taxonomy" id="242231"/>
    <lineage>
        <taxon>Bacteria</taxon>
        <taxon>Pseudomonadati</taxon>
        <taxon>Pseudomonadota</taxon>
        <taxon>Betaproteobacteria</taxon>
        <taxon>Neisseriales</taxon>
        <taxon>Neisseriaceae</taxon>
        <taxon>Neisseria</taxon>
    </lineage>
</organism>
<accession>O87408</accession>
<accession>Q5F9H1</accession>
<feature type="chain" id="PRO_0000211741" description="Recombination-associated protein RdgC">
    <location>
        <begin position="1"/>
        <end position="299"/>
    </location>
</feature>
<gene>
    <name type="primary">rdgC</name>
    <name type="ordered locus">NGO_0423</name>
</gene>
<proteinExistence type="inferred from homology"/>
<sequence>MWFKQISFYPLNKEKLPEADVLADKLAEAEFTHCQGLDWFSEGFTAPVSFSPELVFPADFTLRVALKKEEKVLPAGVIRDILEEKVAEIQNNEARNVGRKEKQELKEQITDDLLPRAFTRSSRTEAVFNTRHGYLLVNNAASAKAENILTKLREALGGLEASLPNTKQSPSSLMTGWLLQGHCEGGFELDSDCELKGTGDIVPVVKVSKQDLTADEVVQHVKNGKTVTRLGLVWREQIAFILTQDFTLKRIQYLDVLQEEAESNGDDAAGLAFASQILMAESVSTMLEELVSYLGGWQD</sequence>
<keyword id="KW-0963">Cytoplasm</keyword>
<keyword id="KW-0233">DNA recombination</keyword>
<keyword id="KW-1185">Reference proteome</keyword>
<evidence type="ECO:0000250" key="1"/>
<evidence type="ECO:0000269" key="2">
    <source>
    </source>
</evidence>
<evidence type="ECO:0000305" key="3"/>
<dbReference type="EMBL" id="AF058711">
    <property type="protein sequence ID" value="AAC63509.1"/>
    <property type="molecule type" value="Genomic_DNA"/>
</dbReference>
<dbReference type="EMBL" id="AE004969">
    <property type="protein sequence ID" value="AAW89166.1"/>
    <property type="molecule type" value="Genomic_DNA"/>
</dbReference>
<dbReference type="RefSeq" id="WP_003687870.1">
    <property type="nucleotide sequence ID" value="NC_002946.2"/>
</dbReference>
<dbReference type="RefSeq" id="YP_207578.1">
    <property type="nucleotide sequence ID" value="NC_002946.2"/>
</dbReference>
<dbReference type="SMR" id="O87408"/>
<dbReference type="STRING" id="242231.NGO_0423"/>
<dbReference type="GeneID" id="66752762"/>
<dbReference type="KEGG" id="ngo:NGO_0423"/>
<dbReference type="PATRIC" id="fig|242231.10.peg.507"/>
<dbReference type="HOGENOM" id="CLU_052038_0_0_4"/>
<dbReference type="Proteomes" id="UP000000535">
    <property type="component" value="Chromosome"/>
</dbReference>
<dbReference type="GO" id="GO:0005737">
    <property type="term" value="C:cytoplasm"/>
    <property type="evidence" value="ECO:0007669"/>
    <property type="project" value="UniProtKB-UniRule"/>
</dbReference>
<dbReference type="GO" id="GO:0009295">
    <property type="term" value="C:nucleoid"/>
    <property type="evidence" value="ECO:0007669"/>
    <property type="project" value="UniProtKB-SubCell"/>
</dbReference>
<dbReference type="GO" id="GO:0006310">
    <property type="term" value="P:DNA recombination"/>
    <property type="evidence" value="ECO:0007669"/>
    <property type="project" value="UniProtKB-UniRule"/>
</dbReference>
<dbReference type="HAMAP" id="MF_00194">
    <property type="entry name" value="RdgC"/>
    <property type="match status" value="1"/>
</dbReference>
<dbReference type="InterPro" id="IPR007476">
    <property type="entry name" value="RdgC"/>
</dbReference>
<dbReference type="NCBIfam" id="NF001464">
    <property type="entry name" value="PRK00321.1-5"/>
    <property type="match status" value="1"/>
</dbReference>
<dbReference type="PANTHER" id="PTHR38103">
    <property type="entry name" value="RECOMBINATION-ASSOCIATED PROTEIN RDGC"/>
    <property type="match status" value="1"/>
</dbReference>
<dbReference type="PANTHER" id="PTHR38103:SF1">
    <property type="entry name" value="RECOMBINATION-ASSOCIATED PROTEIN RDGC"/>
    <property type="match status" value="1"/>
</dbReference>
<dbReference type="Pfam" id="PF04381">
    <property type="entry name" value="RdgC"/>
    <property type="match status" value="1"/>
</dbReference>